<name>LEUD_DECAR</name>
<evidence type="ECO:0000255" key="1">
    <source>
        <dbReference type="HAMAP-Rule" id="MF_01031"/>
    </source>
</evidence>
<gene>
    <name evidence="1" type="primary">leuD</name>
    <name type="ordered locus">Daro_0863</name>
</gene>
<keyword id="KW-0028">Amino-acid biosynthesis</keyword>
<keyword id="KW-0100">Branched-chain amino acid biosynthesis</keyword>
<keyword id="KW-0432">Leucine biosynthesis</keyword>
<keyword id="KW-0456">Lyase</keyword>
<accession>Q47HR2</accession>
<sequence>MDKFVRLEGLVAPLDRSNVDTDAIIPKQFLKSIKRSGFGPNAFDEWRYMDVGQPGQDNTGRPKNPNFVLNQPRYQGAEVLLTRANFGCGSSREHAPWALLDFGFKAIIAESFADIFFNNCFKNGILPIVLPAAEIEALFQQVEATPGYKLVVDLSAQAVVRPDGHGIPFQIDAFRKECLLNGWDDIGLTLRHAEKIREFEAKRRVDQPWLFS</sequence>
<comment type="function">
    <text evidence="1">Catalyzes the isomerization between 2-isopropylmalate and 3-isopropylmalate, via the formation of 2-isopropylmaleate.</text>
</comment>
<comment type="catalytic activity">
    <reaction evidence="1">
        <text>(2R,3S)-3-isopropylmalate = (2S)-2-isopropylmalate</text>
        <dbReference type="Rhea" id="RHEA:32287"/>
        <dbReference type="ChEBI" id="CHEBI:1178"/>
        <dbReference type="ChEBI" id="CHEBI:35121"/>
        <dbReference type="EC" id="4.2.1.33"/>
    </reaction>
</comment>
<comment type="pathway">
    <text evidence="1">Amino-acid biosynthesis; L-leucine biosynthesis; L-leucine from 3-methyl-2-oxobutanoate: step 2/4.</text>
</comment>
<comment type="subunit">
    <text evidence="1">Heterodimer of LeuC and LeuD.</text>
</comment>
<comment type="similarity">
    <text evidence="1">Belongs to the LeuD family. LeuD type 1 subfamily.</text>
</comment>
<feature type="chain" id="PRO_0000141817" description="3-isopropylmalate dehydratase small subunit">
    <location>
        <begin position="1"/>
        <end position="212"/>
    </location>
</feature>
<dbReference type="EC" id="4.2.1.33" evidence="1"/>
<dbReference type="EMBL" id="CP000089">
    <property type="protein sequence ID" value="AAZ45619.1"/>
    <property type="molecule type" value="Genomic_DNA"/>
</dbReference>
<dbReference type="SMR" id="Q47HR2"/>
<dbReference type="STRING" id="159087.Daro_0863"/>
<dbReference type="KEGG" id="dar:Daro_0863"/>
<dbReference type="eggNOG" id="COG0066">
    <property type="taxonomic scope" value="Bacteria"/>
</dbReference>
<dbReference type="HOGENOM" id="CLU_081378_0_3_4"/>
<dbReference type="OrthoDB" id="9777465at2"/>
<dbReference type="UniPathway" id="UPA00048">
    <property type="reaction ID" value="UER00071"/>
</dbReference>
<dbReference type="GO" id="GO:0009316">
    <property type="term" value="C:3-isopropylmalate dehydratase complex"/>
    <property type="evidence" value="ECO:0007669"/>
    <property type="project" value="InterPro"/>
</dbReference>
<dbReference type="GO" id="GO:0003861">
    <property type="term" value="F:3-isopropylmalate dehydratase activity"/>
    <property type="evidence" value="ECO:0007669"/>
    <property type="project" value="UniProtKB-UniRule"/>
</dbReference>
<dbReference type="GO" id="GO:0009098">
    <property type="term" value="P:L-leucine biosynthetic process"/>
    <property type="evidence" value="ECO:0007669"/>
    <property type="project" value="UniProtKB-UniRule"/>
</dbReference>
<dbReference type="CDD" id="cd01577">
    <property type="entry name" value="IPMI_Swivel"/>
    <property type="match status" value="1"/>
</dbReference>
<dbReference type="FunFam" id="3.20.19.10:FF:000003">
    <property type="entry name" value="3-isopropylmalate dehydratase small subunit"/>
    <property type="match status" value="1"/>
</dbReference>
<dbReference type="Gene3D" id="3.20.19.10">
    <property type="entry name" value="Aconitase, domain 4"/>
    <property type="match status" value="1"/>
</dbReference>
<dbReference type="HAMAP" id="MF_01031">
    <property type="entry name" value="LeuD_type1"/>
    <property type="match status" value="1"/>
</dbReference>
<dbReference type="InterPro" id="IPR004431">
    <property type="entry name" value="3-IsopropMal_deHydase_ssu"/>
</dbReference>
<dbReference type="InterPro" id="IPR015928">
    <property type="entry name" value="Aconitase/3IPM_dehydase_swvl"/>
</dbReference>
<dbReference type="InterPro" id="IPR000573">
    <property type="entry name" value="AconitaseA/IPMdHydase_ssu_swvl"/>
</dbReference>
<dbReference type="InterPro" id="IPR033940">
    <property type="entry name" value="IPMI_Swivel"/>
</dbReference>
<dbReference type="InterPro" id="IPR050075">
    <property type="entry name" value="LeuD"/>
</dbReference>
<dbReference type="NCBIfam" id="TIGR00171">
    <property type="entry name" value="leuD"/>
    <property type="match status" value="1"/>
</dbReference>
<dbReference type="NCBIfam" id="NF002458">
    <property type="entry name" value="PRK01641.1"/>
    <property type="match status" value="1"/>
</dbReference>
<dbReference type="PANTHER" id="PTHR43345:SF5">
    <property type="entry name" value="3-ISOPROPYLMALATE DEHYDRATASE SMALL SUBUNIT"/>
    <property type="match status" value="1"/>
</dbReference>
<dbReference type="PANTHER" id="PTHR43345">
    <property type="entry name" value="3-ISOPROPYLMALATE DEHYDRATASE SMALL SUBUNIT 2-RELATED-RELATED"/>
    <property type="match status" value="1"/>
</dbReference>
<dbReference type="Pfam" id="PF00694">
    <property type="entry name" value="Aconitase_C"/>
    <property type="match status" value="1"/>
</dbReference>
<dbReference type="SUPFAM" id="SSF52016">
    <property type="entry name" value="LeuD/IlvD-like"/>
    <property type="match status" value="1"/>
</dbReference>
<organism>
    <name type="scientific">Dechloromonas aromatica (strain RCB)</name>
    <dbReference type="NCBI Taxonomy" id="159087"/>
    <lineage>
        <taxon>Bacteria</taxon>
        <taxon>Pseudomonadati</taxon>
        <taxon>Pseudomonadota</taxon>
        <taxon>Betaproteobacteria</taxon>
        <taxon>Rhodocyclales</taxon>
        <taxon>Azonexaceae</taxon>
        <taxon>Dechloromonas</taxon>
    </lineage>
</organism>
<reference key="1">
    <citation type="journal article" date="2009" name="BMC Genomics">
        <title>Metabolic analysis of the soil microbe Dechloromonas aromatica str. RCB: indications of a surprisingly complex life-style and cryptic anaerobic pathways for aromatic degradation.</title>
        <authorList>
            <person name="Salinero K.K."/>
            <person name="Keller K."/>
            <person name="Feil W.S."/>
            <person name="Feil H."/>
            <person name="Trong S."/>
            <person name="Di Bartolo G."/>
            <person name="Lapidus A."/>
        </authorList>
    </citation>
    <scope>NUCLEOTIDE SEQUENCE [LARGE SCALE GENOMIC DNA]</scope>
    <source>
        <strain>RCB</strain>
    </source>
</reference>
<proteinExistence type="inferred from homology"/>
<protein>
    <recommendedName>
        <fullName evidence="1">3-isopropylmalate dehydratase small subunit</fullName>
        <ecNumber evidence="1">4.2.1.33</ecNumber>
    </recommendedName>
    <alternativeName>
        <fullName evidence="1">Alpha-IPM isomerase</fullName>
        <shortName evidence="1">IPMI</shortName>
    </alternativeName>
    <alternativeName>
        <fullName evidence="1">Isopropylmalate isomerase</fullName>
    </alternativeName>
</protein>